<feature type="chain" id="PRO_0000080604" description="Probable ubiquitin carboxyl-terminal hydrolase 3">
    <location>
        <begin position="1"/>
        <end position="512"/>
    </location>
</feature>
<feature type="domain" description="USP">
    <location>
        <begin position="133"/>
        <end position="511"/>
    </location>
</feature>
<feature type="region of interest" description="Disordered" evidence="3">
    <location>
        <begin position="64"/>
        <end position="109"/>
    </location>
</feature>
<feature type="active site" description="Nucleophile" evidence="1 2">
    <location>
        <position position="142"/>
    </location>
</feature>
<feature type="active site" description="Proton acceptor" evidence="1 2">
    <location>
        <position position="453"/>
    </location>
</feature>
<proteinExistence type="inferred from homology"/>
<organism>
    <name type="scientific">Schizosaccharomyces pombe (strain 972 / ATCC 24843)</name>
    <name type="common">Fission yeast</name>
    <dbReference type="NCBI Taxonomy" id="284812"/>
    <lineage>
        <taxon>Eukaryota</taxon>
        <taxon>Fungi</taxon>
        <taxon>Dikarya</taxon>
        <taxon>Ascomycota</taxon>
        <taxon>Taphrinomycotina</taxon>
        <taxon>Schizosaccharomycetes</taxon>
        <taxon>Schizosaccharomycetales</taxon>
        <taxon>Schizosaccharomycetaceae</taxon>
        <taxon>Schizosaccharomyces</taxon>
    </lineage>
</organism>
<keyword id="KW-0378">Hydrolase</keyword>
<keyword id="KW-0645">Protease</keyword>
<keyword id="KW-1185">Reference proteome</keyword>
<keyword id="KW-0788">Thiol protease</keyword>
<keyword id="KW-0833">Ubl conjugation pathway</keyword>
<name>UBP3_SCHPO</name>
<protein>
    <recommendedName>
        <fullName>Probable ubiquitin carboxyl-terminal hydrolase 3</fullName>
        <ecNumber>3.4.19.12</ecNumber>
    </recommendedName>
    <alternativeName>
        <fullName>Deubiquitinating enzyme 3</fullName>
    </alternativeName>
    <alternativeName>
        <fullName>Ubiquitin thioesterase 3</fullName>
    </alternativeName>
    <alternativeName>
        <fullName>Ubiquitin-specific-processing protease 3</fullName>
    </alternativeName>
</protein>
<reference key="1">
    <citation type="journal article" date="2002" name="Nature">
        <title>The genome sequence of Schizosaccharomyces pombe.</title>
        <authorList>
            <person name="Wood V."/>
            <person name="Gwilliam R."/>
            <person name="Rajandream M.A."/>
            <person name="Lyne M.H."/>
            <person name="Lyne R."/>
            <person name="Stewart A."/>
            <person name="Sgouros J.G."/>
            <person name="Peat N."/>
            <person name="Hayles J."/>
            <person name="Baker S.G."/>
            <person name="Basham D."/>
            <person name="Bowman S."/>
            <person name="Brooks K."/>
            <person name="Brown D."/>
            <person name="Brown S."/>
            <person name="Chillingworth T."/>
            <person name="Churcher C.M."/>
            <person name="Collins M."/>
            <person name="Connor R."/>
            <person name="Cronin A."/>
            <person name="Davis P."/>
            <person name="Feltwell T."/>
            <person name="Fraser A."/>
            <person name="Gentles S."/>
            <person name="Goble A."/>
            <person name="Hamlin N."/>
            <person name="Harris D.E."/>
            <person name="Hidalgo J."/>
            <person name="Hodgson G."/>
            <person name="Holroyd S."/>
            <person name="Hornsby T."/>
            <person name="Howarth S."/>
            <person name="Huckle E.J."/>
            <person name="Hunt S."/>
            <person name="Jagels K."/>
            <person name="James K.D."/>
            <person name="Jones L."/>
            <person name="Jones M."/>
            <person name="Leather S."/>
            <person name="McDonald S."/>
            <person name="McLean J."/>
            <person name="Mooney P."/>
            <person name="Moule S."/>
            <person name="Mungall K.L."/>
            <person name="Murphy L.D."/>
            <person name="Niblett D."/>
            <person name="Odell C."/>
            <person name="Oliver K."/>
            <person name="O'Neil S."/>
            <person name="Pearson D."/>
            <person name="Quail M.A."/>
            <person name="Rabbinowitsch E."/>
            <person name="Rutherford K.M."/>
            <person name="Rutter S."/>
            <person name="Saunders D."/>
            <person name="Seeger K."/>
            <person name="Sharp S."/>
            <person name="Skelton J."/>
            <person name="Simmonds M.N."/>
            <person name="Squares R."/>
            <person name="Squares S."/>
            <person name="Stevens K."/>
            <person name="Taylor K."/>
            <person name="Taylor R.G."/>
            <person name="Tivey A."/>
            <person name="Walsh S.V."/>
            <person name="Warren T."/>
            <person name="Whitehead S."/>
            <person name="Woodward J.R."/>
            <person name="Volckaert G."/>
            <person name="Aert R."/>
            <person name="Robben J."/>
            <person name="Grymonprez B."/>
            <person name="Weltjens I."/>
            <person name="Vanstreels E."/>
            <person name="Rieger M."/>
            <person name="Schaefer M."/>
            <person name="Mueller-Auer S."/>
            <person name="Gabel C."/>
            <person name="Fuchs M."/>
            <person name="Duesterhoeft A."/>
            <person name="Fritzc C."/>
            <person name="Holzer E."/>
            <person name="Moestl D."/>
            <person name="Hilbert H."/>
            <person name="Borzym K."/>
            <person name="Langer I."/>
            <person name="Beck A."/>
            <person name="Lehrach H."/>
            <person name="Reinhardt R."/>
            <person name="Pohl T.M."/>
            <person name="Eger P."/>
            <person name="Zimmermann W."/>
            <person name="Wedler H."/>
            <person name="Wambutt R."/>
            <person name="Purnelle B."/>
            <person name="Goffeau A."/>
            <person name="Cadieu E."/>
            <person name="Dreano S."/>
            <person name="Gloux S."/>
            <person name="Lelaure V."/>
            <person name="Mottier S."/>
            <person name="Galibert F."/>
            <person name="Aves S.J."/>
            <person name="Xiang Z."/>
            <person name="Hunt C."/>
            <person name="Moore K."/>
            <person name="Hurst S.M."/>
            <person name="Lucas M."/>
            <person name="Rochet M."/>
            <person name="Gaillardin C."/>
            <person name="Tallada V.A."/>
            <person name="Garzon A."/>
            <person name="Thode G."/>
            <person name="Daga R.R."/>
            <person name="Cruzado L."/>
            <person name="Jimenez J."/>
            <person name="Sanchez M."/>
            <person name="del Rey F."/>
            <person name="Benito J."/>
            <person name="Dominguez A."/>
            <person name="Revuelta J.L."/>
            <person name="Moreno S."/>
            <person name="Armstrong J."/>
            <person name="Forsburg S.L."/>
            <person name="Cerutti L."/>
            <person name="Lowe T."/>
            <person name="McCombie W.R."/>
            <person name="Paulsen I."/>
            <person name="Potashkin J."/>
            <person name="Shpakovski G.V."/>
            <person name="Ussery D."/>
            <person name="Barrell B.G."/>
            <person name="Nurse P."/>
        </authorList>
    </citation>
    <scope>NUCLEOTIDE SEQUENCE [LARGE SCALE GENOMIC DNA]</scope>
    <source>
        <strain>972 / ATCC 24843</strain>
    </source>
</reference>
<gene>
    <name type="primary">ubp3</name>
    <name type="ORF">SPBP8B7.21</name>
</gene>
<dbReference type="EC" id="3.4.19.12"/>
<dbReference type="EMBL" id="CU329671">
    <property type="protein sequence ID" value="CAA21806.1"/>
    <property type="molecule type" value="Genomic_DNA"/>
</dbReference>
<dbReference type="PIR" id="T40815">
    <property type="entry name" value="T40815"/>
</dbReference>
<dbReference type="RefSeq" id="NP_596528.1">
    <property type="nucleotide sequence ID" value="NM_001022449.2"/>
</dbReference>
<dbReference type="SMR" id="O94269"/>
<dbReference type="BioGRID" id="277889">
    <property type="interactions" value="116"/>
</dbReference>
<dbReference type="FunCoup" id="O94269">
    <property type="interactions" value="646"/>
</dbReference>
<dbReference type="STRING" id="284812.O94269"/>
<dbReference type="MEROPS" id="C19.A57"/>
<dbReference type="iPTMnet" id="O94269"/>
<dbReference type="PaxDb" id="4896-SPBP8B7.21.1"/>
<dbReference type="EnsemblFungi" id="SPBP8B7.21.1">
    <property type="protein sequence ID" value="SPBP8B7.21.1:pep"/>
    <property type="gene ID" value="SPBP8B7.21"/>
</dbReference>
<dbReference type="GeneID" id="2541378"/>
<dbReference type="KEGG" id="spo:2541378"/>
<dbReference type="PomBase" id="SPBP8B7.21">
    <property type="gene designation" value="ubp3"/>
</dbReference>
<dbReference type="VEuPathDB" id="FungiDB:SPBP8B7.21"/>
<dbReference type="eggNOG" id="KOG1871">
    <property type="taxonomic scope" value="Eukaryota"/>
</dbReference>
<dbReference type="HOGENOM" id="CLU_008279_7_2_1"/>
<dbReference type="InParanoid" id="O94269"/>
<dbReference type="OMA" id="TATKQMY"/>
<dbReference type="PhylomeDB" id="O94269"/>
<dbReference type="Reactome" id="R-SPO-5656169">
    <property type="pathway name" value="Termination of translesion DNA synthesis"/>
</dbReference>
<dbReference type="Reactome" id="R-SPO-5689880">
    <property type="pathway name" value="Ub-specific processing proteases"/>
</dbReference>
<dbReference type="CD-CODE" id="F5301D48">
    <property type="entry name" value="Stress granule"/>
</dbReference>
<dbReference type="PRO" id="PR:O94269"/>
<dbReference type="Proteomes" id="UP000002485">
    <property type="component" value="Chromosome II"/>
</dbReference>
<dbReference type="GO" id="GO:0005737">
    <property type="term" value="C:cytoplasm"/>
    <property type="evidence" value="ECO:0007005"/>
    <property type="project" value="PomBase"/>
</dbReference>
<dbReference type="GO" id="GO:0010494">
    <property type="term" value="C:cytoplasmic stress granule"/>
    <property type="evidence" value="ECO:0000269"/>
    <property type="project" value="PomBase"/>
</dbReference>
<dbReference type="GO" id="GO:0005829">
    <property type="term" value="C:cytosol"/>
    <property type="evidence" value="ECO:0007005"/>
    <property type="project" value="PomBase"/>
</dbReference>
<dbReference type="GO" id="GO:0005634">
    <property type="term" value="C:nucleus"/>
    <property type="evidence" value="ECO:0007005"/>
    <property type="project" value="PomBase"/>
</dbReference>
<dbReference type="GO" id="GO:0004843">
    <property type="term" value="F:cysteine-type deubiquitinase activity"/>
    <property type="evidence" value="ECO:0000316"/>
    <property type="project" value="PomBase"/>
</dbReference>
<dbReference type="GO" id="GO:0140492">
    <property type="term" value="F:metal-dependent deubiquitinase activity"/>
    <property type="evidence" value="ECO:0007005"/>
    <property type="project" value="PomBase"/>
</dbReference>
<dbReference type="GO" id="GO:0071629">
    <property type="term" value="P:cytoplasm protein quality control by the ubiquitin-proteasome system"/>
    <property type="evidence" value="ECO:0000316"/>
    <property type="project" value="PomBase"/>
</dbReference>
<dbReference type="GO" id="GO:0016579">
    <property type="term" value="P:protein deubiquitination"/>
    <property type="evidence" value="ECO:0007669"/>
    <property type="project" value="InterPro"/>
</dbReference>
<dbReference type="GO" id="GO:0031647">
    <property type="term" value="P:regulation of protein stability"/>
    <property type="evidence" value="ECO:0000318"/>
    <property type="project" value="GO_Central"/>
</dbReference>
<dbReference type="GO" id="GO:2000156">
    <property type="term" value="P:regulation of retrograde vesicle-mediated transport, Golgi to ER"/>
    <property type="evidence" value="ECO:0000266"/>
    <property type="project" value="PomBase"/>
</dbReference>
<dbReference type="CDD" id="cd02257">
    <property type="entry name" value="Peptidase_C19"/>
    <property type="match status" value="1"/>
</dbReference>
<dbReference type="FunFam" id="3.90.70.10:FF:000092">
    <property type="entry name" value="Ubiquitin carboxyl-terminal hydrolase"/>
    <property type="match status" value="1"/>
</dbReference>
<dbReference type="Gene3D" id="3.90.70.10">
    <property type="entry name" value="Cysteine proteinases"/>
    <property type="match status" value="1"/>
</dbReference>
<dbReference type="InterPro" id="IPR038765">
    <property type="entry name" value="Papain-like_cys_pep_sf"/>
</dbReference>
<dbReference type="InterPro" id="IPR050164">
    <property type="entry name" value="Peptidase_C19"/>
</dbReference>
<dbReference type="InterPro" id="IPR001394">
    <property type="entry name" value="Peptidase_C19_UCH"/>
</dbReference>
<dbReference type="InterPro" id="IPR018200">
    <property type="entry name" value="USP_CS"/>
</dbReference>
<dbReference type="InterPro" id="IPR028889">
    <property type="entry name" value="USP_dom"/>
</dbReference>
<dbReference type="PANTHER" id="PTHR24006">
    <property type="entry name" value="UBIQUITIN CARBOXYL-TERMINAL HYDROLASE"/>
    <property type="match status" value="1"/>
</dbReference>
<dbReference type="PANTHER" id="PTHR24006:SF687">
    <property type="entry name" value="UBIQUITIN CARBOXYL-TERMINAL HYDROLASE 10"/>
    <property type="match status" value="1"/>
</dbReference>
<dbReference type="Pfam" id="PF00443">
    <property type="entry name" value="UCH"/>
    <property type="match status" value="1"/>
</dbReference>
<dbReference type="SUPFAM" id="SSF54001">
    <property type="entry name" value="Cysteine proteinases"/>
    <property type="match status" value="1"/>
</dbReference>
<dbReference type="PROSITE" id="PS00972">
    <property type="entry name" value="USP_1"/>
    <property type="match status" value="1"/>
</dbReference>
<dbReference type="PROSITE" id="PS00973">
    <property type="entry name" value="USP_2"/>
    <property type="match status" value="1"/>
</dbReference>
<dbReference type="PROSITE" id="PS50235">
    <property type="entry name" value="USP_3"/>
    <property type="match status" value="1"/>
</dbReference>
<comment type="catalytic activity">
    <reaction>
        <text>Thiol-dependent hydrolysis of ester, thioester, amide, peptide and isopeptide bonds formed by the C-terminal Gly of ubiquitin (a 76-residue protein attached to proteins as an intracellular targeting signal).</text>
        <dbReference type="EC" id="3.4.19.12"/>
    </reaction>
</comment>
<comment type="similarity">
    <text evidence="4">Belongs to the peptidase C19 family.</text>
</comment>
<evidence type="ECO:0000255" key="1">
    <source>
        <dbReference type="PROSITE-ProRule" id="PRU10092"/>
    </source>
</evidence>
<evidence type="ECO:0000255" key="2">
    <source>
        <dbReference type="PROSITE-ProRule" id="PRU10093"/>
    </source>
</evidence>
<evidence type="ECO:0000256" key="3">
    <source>
        <dbReference type="SAM" id="MobiDB-lite"/>
    </source>
</evidence>
<evidence type="ECO:0000305" key="4"/>
<sequence length="512" mass="58081">MRDLTSATDSASLESDSSRNQFIINSLLPWYSCSEHEFPHRKARKRRSPKNLDWSVSVQMPLVTSKTKESEKSPKSWSAIAKKHVQGDSPVKKSHSVPVPSDRSEKKSFNSSLGELIETYSPSLDAPRPIQPRGFINTGNICFMNSILQALMYCVPFYNLLKQINRMVPYNFERTTPLIESLTMLSRDFREYSEKFDLQGDSILPEVVYSATKGNPRFEMLQTGEQEDAEEFLNLFLDELHEEFVRERRHYLLKNDERNPKSDIKISNGIKSGLDSFDDQSSVEASGWTEVGKNKKPVIARSATVERSPISQIFGGQLRSTLRVPSARDSVLLEPFQPLQLDIQAEDIHSVIDALEHMTAPEILPEWHSSKGNVTATKQMYIESLPPVLILHLKRFFYEASGGTQKNYKPIAYPARLSIPQNVFSPSVRGSIHPEYDLNAVVYHHGTSASGGHYTVDVQQLDKSGWFRIDDTHIHRVPIHDVENSELSADPSLSKLGHGDRVAYLLFYTRRS</sequence>
<accession>O94269</accession>